<accession>Q8LFP7</accession>
<accession>O49406</accession>
<keyword id="KW-0007">Acetylation</keyword>
<keyword id="KW-0472">Membrane</keyword>
<keyword id="KW-0597">Phosphoprotein</keyword>
<keyword id="KW-1185">Reference proteome</keyword>
<keyword id="KW-0677">Repeat</keyword>
<keyword id="KW-0812">Transmembrane</keyword>
<keyword id="KW-1133">Transmembrane helix</keyword>
<keyword id="KW-0813">Transport</keyword>
<protein>
    <recommendedName>
        <fullName>Aquaporin NIP1-2</fullName>
    </recommendedName>
    <alternativeName>
        <fullName>NOD26-like intrinsic protein 1-2</fullName>
        <shortName>AtNIP1;2</shortName>
    </alternativeName>
    <alternativeName>
        <fullName>Nodulin-26-like major intrinsic protein 2</fullName>
        <shortName>NodLikeMip2</shortName>
        <shortName>Protein NLM2</shortName>
    </alternativeName>
</protein>
<feature type="chain" id="PRO_0000064063" description="Aquaporin NIP1-2">
    <location>
        <begin position="1"/>
        <end position="294"/>
    </location>
</feature>
<feature type="transmembrane region" description="Helical; Name=1" evidence="3">
    <location>
        <begin position="54"/>
        <end position="74"/>
    </location>
</feature>
<feature type="transmembrane region" description="Helical; Name=2" evidence="3">
    <location>
        <begin position="82"/>
        <end position="102"/>
    </location>
</feature>
<feature type="transmembrane region" description="Helical; Name=3" evidence="3">
    <location>
        <begin position="133"/>
        <end position="153"/>
    </location>
</feature>
<feature type="transmembrane region" description="Helical; Name=4" evidence="3">
    <location>
        <begin position="177"/>
        <end position="197"/>
    </location>
</feature>
<feature type="transmembrane region" description="Helical; Name=5" evidence="3">
    <location>
        <begin position="201"/>
        <end position="221"/>
    </location>
</feature>
<feature type="transmembrane region" description="Helical; Name=6" evidence="3">
    <location>
        <begin position="248"/>
        <end position="268"/>
    </location>
</feature>
<feature type="short sequence motif" description="NPA 1">
    <location>
        <begin position="111"/>
        <end position="113"/>
    </location>
</feature>
<feature type="short sequence motif" description="NPA 2">
    <location>
        <begin position="230"/>
        <end position="232"/>
    </location>
</feature>
<feature type="modified residue" description="N-acetylmethionine" evidence="2">
    <location>
        <position position="1"/>
    </location>
</feature>
<feature type="modified residue" description="Phosphoserine" evidence="1">
    <location>
        <position position="283"/>
    </location>
</feature>
<feature type="sequence conflict" description="In Ref. 5; AAM61294." evidence="6" ref="5">
    <location>
        <position position="26"/>
    </location>
</feature>
<feature type="sequence conflict" description="In Ref. 5; AAM61294." evidence="6" ref="5">
    <original>P</original>
    <variation>L</variation>
    <location>
        <position position="85"/>
    </location>
</feature>
<reference key="1">
    <citation type="journal article" date="2000" name="FEBS Lett.">
        <title>Functional identification of the glycerol permease activity of Arabidopsis thaliana NLM1 and NLM2 proteins by heterologous expression in Saccharomyces cerevisiae.</title>
        <authorList>
            <person name="Weig A.R."/>
            <person name="Jakob C.U."/>
        </authorList>
    </citation>
    <scope>NUCLEOTIDE SEQUENCE [MRNA]</scope>
    <scope>FUNCTION</scope>
    <source>
        <strain>cv. Columbia</strain>
    </source>
</reference>
<reference key="2">
    <citation type="journal article" date="1999" name="Nature">
        <title>Sequence and analysis of chromosome 4 of the plant Arabidopsis thaliana.</title>
        <authorList>
            <person name="Mayer K.F.X."/>
            <person name="Schueller C."/>
            <person name="Wambutt R."/>
            <person name="Murphy G."/>
            <person name="Volckaert G."/>
            <person name="Pohl T."/>
            <person name="Duesterhoeft A."/>
            <person name="Stiekema W."/>
            <person name="Entian K.-D."/>
            <person name="Terryn N."/>
            <person name="Harris B."/>
            <person name="Ansorge W."/>
            <person name="Brandt P."/>
            <person name="Grivell L.A."/>
            <person name="Rieger M."/>
            <person name="Weichselgartner M."/>
            <person name="de Simone V."/>
            <person name="Obermaier B."/>
            <person name="Mache R."/>
            <person name="Mueller M."/>
            <person name="Kreis M."/>
            <person name="Delseny M."/>
            <person name="Puigdomenech P."/>
            <person name="Watson M."/>
            <person name="Schmidtheini T."/>
            <person name="Reichert B."/>
            <person name="Portetelle D."/>
            <person name="Perez-Alonso M."/>
            <person name="Boutry M."/>
            <person name="Bancroft I."/>
            <person name="Vos P."/>
            <person name="Hoheisel J."/>
            <person name="Zimmermann W."/>
            <person name="Wedler H."/>
            <person name="Ridley P."/>
            <person name="Langham S.-A."/>
            <person name="McCullagh B."/>
            <person name="Bilham L."/>
            <person name="Robben J."/>
            <person name="van der Schueren J."/>
            <person name="Grymonprez B."/>
            <person name="Chuang Y.-J."/>
            <person name="Vandenbussche F."/>
            <person name="Braeken M."/>
            <person name="Weltjens I."/>
            <person name="Voet M."/>
            <person name="Bastiaens I."/>
            <person name="Aert R."/>
            <person name="Defoor E."/>
            <person name="Weitzenegger T."/>
            <person name="Bothe G."/>
            <person name="Ramsperger U."/>
            <person name="Hilbert H."/>
            <person name="Braun M."/>
            <person name="Holzer E."/>
            <person name="Brandt A."/>
            <person name="Peters S."/>
            <person name="van Staveren M."/>
            <person name="Dirkse W."/>
            <person name="Mooijman P."/>
            <person name="Klein Lankhorst R."/>
            <person name="Rose M."/>
            <person name="Hauf J."/>
            <person name="Koetter P."/>
            <person name="Berneiser S."/>
            <person name="Hempel S."/>
            <person name="Feldpausch M."/>
            <person name="Lamberth S."/>
            <person name="Van den Daele H."/>
            <person name="De Keyser A."/>
            <person name="Buysshaert C."/>
            <person name="Gielen J."/>
            <person name="Villarroel R."/>
            <person name="De Clercq R."/>
            <person name="van Montagu M."/>
            <person name="Rogers J."/>
            <person name="Cronin A."/>
            <person name="Quail M.A."/>
            <person name="Bray-Allen S."/>
            <person name="Clark L."/>
            <person name="Doggett J."/>
            <person name="Hall S."/>
            <person name="Kay M."/>
            <person name="Lennard N."/>
            <person name="McLay K."/>
            <person name="Mayes R."/>
            <person name="Pettett A."/>
            <person name="Rajandream M.A."/>
            <person name="Lyne M."/>
            <person name="Benes V."/>
            <person name="Rechmann S."/>
            <person name="Borkova D."/>
            <person name="Bloecker H."/>
            <person name="Scharfe M."/>
            <person name="Grimm M."/>
            <person name="Loehnert T.-H."/>
            <person name="Dose S."/>
            <person name="de Haan M."/>
            <person name="Maarse A.C."/>
            <person name="Schaefer M."/>
            <person name="Mueller-Auer S."/>
            <person name="Gabel C."/>
            <person name="Fuchs M."/>
            <person name="Fartmann B."/>
            <person name="Granderath K."/>
            <person name="Dauner D."/>
            <person name="Herzl A."/>
            <person name="Neumann S."/>
            <person name="Argiriou A."/>
            <person name="Vitale D."/>
            <person name="Liguori R."/>
            <person name="Piravandi E."/>
            <person name="Massenet O."/>
            <person name="Quigley F."/>
            <person name="Clabauld G."/>
            <person name="Muendlein A."/>
            <person name="Felber R."/>
            <person name="Schnabl S."/>
            <person name="Hiller R."/>
            <person name="Schmidt W."/>
            <person name="Lecharny A."/>
            <person name="Aubourg S."/>
            <person name="Chefdor F."/>
            <person name="Cooke R."/>
            <person name="Berger C."/>
            <person name="Monfort A."/>
            <person name="Casacuberta E."/>
            <person name="Gibbons T."/>
            <person name="Weber N."/>
            <person name="Vandenbol M."/>
            <person name="Bargues M."/>
            <person name="Terol J."/>
            <person name="Torres A."/>
            <person name="Perez-Perez A."/>
            <person name="Purnelle B."/>
            <person name="Bent E."/>
            <person name="Johnson S."/>
            <person name="Tacon D."/>
            <person name="Jesse T."/>
            <person name="Heijnen L."/>
            <person name="Schwarz S."/>
            <person name="Scholler P."/>
            <person name="Heber S."/>
            <person name="Francs P."/>
            <person name="Bielke C."/>
            <person name="Frishman D."/>
            <person name="Haase D."/>
            <person name="Lemcke K."/>
            <person name="Mewes H.-W."/>
            <person name="Stocker S."/>
            <person name="Zaccaria P."/>
            <person name="Bevan M."/>
            <person name="Wilson R.K."/>
            <person name="de la Bastide M."/>
            <person name="Habermann K."/>
            <person name="Parnell L."/>
            <person name="Dedhia N."/>
            <person name="Gnoj L."/>
            <person name="Schutz K."/>
            <person name="Huang E."/>
            <person name="Spiegel L."/>
            <person name="Sekhon M."/>
            <person name="Murray J."/>
            <person name="Sheet P."/>
            <person name="Cordes M."/>
            <person name="Abu-Threideh J."/>
            <person name="Stoneking T."/>
            <person name="Kalicki J."/>
            <person name="Graves T."/>
            <person name="Harmon G."/>
            <person name="Edwards J."/>
            <person name="Latreille P."/>
            <person name="Courtney L."/>
            <person name="Cloud J."/>
            <person name="Abbott A."/>
            <person name="Scott K."/>
            <person name="Johnson D."/>
            <person name="Minx P."/>
            <person name="Bentley D."/>
            <person name="Fulton B."/>
            <person name="Miller N."/>
            <person name="Greco T."/>
            <person name="Kemp K."/>
            <person name="Kramer J."/>
            <person name="Fulton L."/>
            <person name="Mardis E."/>
            <person name="Dante M."/>
            <person name="Pepin K."/>
            <person name="Hillier L.W."/>
            <person name="Nelson J."/>
            <person name="Spieth J."/>
            <person name="Ryan E."/>
            <person name="Andrews S."/>
            <person name="Geisel C."/>
            <person name="Layman D."/>
            <person name="Du H."/>
            <person name="Ali J."/>
            <person name="Berghoff A."/>
            <person name="Jones K."/>
            <person name="Drone K."/>
            <person name="Cotton M."/>
            <person name="Joshu C."/>
            <person name="Antonoiu B."/>
            <person name="Zidanic M."/>
            <person name="Strong C."/>
            <person name="Sun H."/>
            <person name="Lamar B."/>
            <person name="Yordan C."/>
            <person name="Ma P."/>
            <person name="Zhong J."/>
            <person name="Preston R."/>
            <person name="Vil D."/>
            <person name="Shekher M."/>
            <person name="Matero A."/>
            <person name="Shah R."/>
            <person name="Swaby I.K."/>
            <person name="O'Shaughnessy A."/>
            <person name="Rodriguez M."/>
            <person name="Hoffman J."/>
            <person name="Till S."/>
            <person name="Granat S."/>
            <person name="Shohdy N."/>
            <person name="Hasegawa A."/>
            <person name="Hameed A."/>
            <person name="Lodhi M."/>
            <person name="Johnson A."/>
            <person name="Chen E."/>
            <person name="Marra M.A."/>
            <person name="Martienssen R."/>
            <person name="McCombie W.R."/>
        </authorList>
    </citation>
    <scope>NUCLEOTIDE SEQUENCE [LARGE SCALE GENOMIC DNA]</scope>
    <source>
        <strain>cv. Columbia</strain>
    </source>
</reference>
<reference key="3">
    <citation type="journal article" date="2017" name="Plant J.">
        <title>Araport11: a complete reannotation of the Arabidopsis thaliana reference genome.</title>
        <authorList>
            <person name="Cheng C.Y."/>
            <person name="Krishnakumar V."/>
            <person name="Chan A.P."/>
            <person name="Thibaud-Nissen F."/>
            <person name="Schobel S."/>
            <person name="Town C.D."/>
        </authorList>
    </citation>
    <scope>GENOME REANNOTATION</scope>
    <source>
        <strain>cv. Columbia</strain>
    </source>
</reference>
<reference key="4">
    <citation type="journal article" date="2003" name="Science">
        <title>Empirical analysis of transcriptional activity in the Arabidopsis genome.</title>
        <authorList>
            <person name="Yamada K."/>
            <person name="Lim J."/>
            <person name="Dale J.M."/>
            <person name="Chen H."/>
            <person name="Shinn P."/>
            <person name="Palm C.J."/>
            <person name="Southwick A.M."/>
            <person name="Wu H.C."/>
            <person name="Kim C.J."/>
            <person name="Nguyen M."/>
            <person name="Pham P.K."/>
            <person name="Cheuk R.F."/>
            <person name="Karlin-Newmann G."/>
            <person name="Liu S.X."/>
            <person name="Lam B."/>
            <person name="Sakano H."/>
            <person name="Wu T."/>
            <person name="Yu G."/>
            <person name="Miranda M."/>
            <person name="Quach H.L."/>
            <person name="Tripp M."/>
            <person name="Chang C.H."/>
            <person name="Lee J.M."/>
            <person name="Toriumi M.J."/>
            <person name="Chan M.M."/>
            <person name="Tang C.C."/>
            <person name="Onodera C.S."/>
            <person name="Deng J.M."/>
            <person name="Akiyama K."/>
            <person name="Ansari Y."/>
            <person name="Arakawa T."/>
            <person name="Banh J."/>
            <person name="Banno F."/>
            <person name="Bowser L."/>
            <person name="Brooks S.Y."/>
            <person name="Carninci P."/>
            <person name="Chao Q."/>
            <person name="Choy N."/>
            <person name="Enju A."/>
            <person name="Goldsmith A.D."/>
            <person name="Gurjal M."/>
            <person name="Hansen N.F."/>
            <person name="Hayashizaki Y."/>
            <person name="Johnson-Hopson C."/>
            <person name="Hsuan V.W."/>
            <person name="Iida K."/>
            <person name="Karnes M."/>
            <person name="Khan S."/>
            <person name="Koesema E."/>
            <person name="Ishida J."/>
            <person name="Jiang P.X."/>
            <person name="Jones T."/>
            <person name="Kawai J."/>
            <person name="Kamiya A."/>
            <person name="Meyers C."/>
            <person name="Nakajima M."/>
            <person name="Narusaka M."/>
            <person name="Seki M."/>
            <person name="Sakurai T."/>
            <person name="Satou M."/>
            <person name="Tamse R."/>
            <person name="Vaysberg M."/>
            <person name="Wallender E.K."/>
            <person name="Wong C."/>
            <person name="Yamamura Y."/>
            <person name="Yuan S."/>
            <person name="Shinozaki K."/>
            <person name="Davis R.W."/>
            <person name="Theologis A."/>
            <person name="Ecker J.R."/>
        </authorList>
    </citation>
    <scope>NUCLEOTIDE SEQUENCE [LARGE SCALE MRNA]</scope>
    <source>
        <strain>cv. Columbia</strain>
    </source>
</reference>
<reference key="5">
    <citation type="submission" date="2002-03" db="EMBL/GenBank/DDBJ databases">
        <title>Full-length cDNA from Arabidopsis thaliana.</title>
        <authorList>
            <person name="Brover V.V."/>
            <person name="Troukhan M.E."/>
            <person name="Alexandrov N.A."/>
            <person name="Lu Y.-P."/>
            <person name="Flavell R.B."/>
            <person name="Feldmann K.A."/>
        </authorList>
    </citation>
    <scope>NUCLEOTIDE SEQUENCE [LARGE SCALE MRNA]</scope>
</reference>
<reference key="6">
    <citation type="journal article" date="2002" name="Genome Biol.">
        <title>From genome to function: the Arabidopsis aquaporins.</title>
        <authorList>
            <person name="Quigley F."/>
            <person name="Rosenberg J.M."/>
            <person name="Shachar-Hill Y."/>
            <person name="Bohnert H.J."/>
        </authorList>
    </citation>
    <scope>NOMENCLATURE</scope>
    <scope>TISSUE SPECIFICITY</scope>
</reference>
<evidence type="ECO:0000250" key="1">
    <source>
        <dbReference type="UniProtKB" id="P43286"/>
    </source>
</evidence>
<evidence type="ECO:0000250" key="2">
    <source>
        <dbReference type="UniProtKB" id="P61837"/>
    </source>
</evidence>
<evidence type="ECO:0000255" key="3"/>
<evidence type="ECO:0000269" key="4">
    <source>
    </source>
</evidence>
<evidence type="ECO:0000269" key="5">
    <source>
    </source>
</evidence>
<evidence type="ECO:0000305" key="6"/>
<proteinExistence type="evidence at transcript level"/>
<gene>
    <name type="primary">NIP1-2</name>
    <name type="synonym">NLM2</name>
    <name type="ordered locus">At4g18910</name>
    <name type="ORF">F13C5.80</name>
</gene>
<name>NIP12_ARATH</name>
<comment type="function">
    <text evidence="4">Water channel probably required to promote glycerol permeability and water transport across cell membranes.</text>
</comment>
<comment type="subcellular location">
    <subcellularLocation>
        <location evidence="6">Membrane</location>
        <topology evidence="6">Multi-pass membrane protein</topology>
    </subcellularLocation>
</comment>
<comment type="tissue specificity">
    <text evidence="5">Expressed in developing seeds.</text>
</comment>
<comment type="domain">
    <text>Aquaporins contain two tandem repeats each containing three membrane-spanning domains and a pore-forming loop with the signature motif Asn-Pro-Ala/Gly (NPA).</text>
</comment>
<comment type="similarity">
    <text evidence="6">Belongs to the MIP/aquaporin (TC 1.A.8) family. NIP (TC 1.A.8.12) subfamily.</text>
</comment>
<sequence length="294" mass="31269">MAEISGNGGDARDGAVVVNLKEEDEQQQQQQAIHKPLKKQDSLLSISVPFLQKLMAEVLGTYFLIFAGCAAVAVNTQHDKAVTLPGIAIVWGLTVMVLVYSLGHISGAHFNPAVTIAFASCGRFPLKQVPAYVISQVIGSTLAAATLRLLFGLDQDVCSGKHDVFVGTLPSGSNLQSFVIEFIITFYLMFVISGVATDNRAIGELAGLAVGSTVLLNVIIAGPVSGASMNPGRSLGPAMVYSCYRGLWIYIVSPIVGAVSGAWVYNMVRYTDKPLREITKSGSFLKTVRNGSSR</sequence>
<organism>
    <name type="scientific">Arabidopsis thaliana</name>
    <name type="common">Mouse-ear cress</name>
    <dbReference type="NCBI Taxonomy" id="3702"/>
    <lineage>
        <taxon>Eukaryota</taxon>
        <taxon>Viridiplantae</taxon>
        <taxon>Streptophyta</taxon>
        <taxon>Embryophyta</taxon>
        <taxon>Tracheophyta</taxon>
        <taxon>Spermatophyta</taxon>
        <taxon>Magnoliopsida</taxon>
        <taxon>eudicotyledons</taxon>
        <taxon>Gunneridae</taxon>
        <taxon>Pentapetalae</taxon>
        <taxon>rosids</taxon>
        <taxon>malvids</taxon>
        <taxon>Brassicales</taxon>
        <taxon>Brassicaceae</taxon>
        <taxon>Camelineae</taxon>
        <taxon>Arabidopsis</taxon>
    </lineage>
</organism>
<dbReference type="EMBL" id="AJ250668">
    <property type="protein sequence ID" value="CAC14597.1"/>
    <property type="molecule type" value="mRNA"/>
</dbReference>
<dbReference type="EMBL" id="AL021711">
    <property type="protein sequence ID" value="CAA16748.1"/>
    <property type="molecule type" value="Genomic_DNA"/>
</dbReference>
<dbReference type="EMBL" id="AL161549">
    <property type="protein sequence ID" value="CAB78893.1"/>
    <property type="molecule type" value="Genomic_DNA"/>
</dbReference>
<dbReference type="EMBL" id="CP002687">
    <property type="protein sequence ID" value="AEE84106.1"/>
    <property type="molecule type" value="Genomic_DNA"/>
</dbReference>
<dbReference type="EMBL" id="AY072380">
    <property type="protein sequence ID" value="AAL62372.1"/>
    <property type="molecule type" value="mRNA"/>
</dbReference>
<dbReference type="EMBL" id="BT000096">
    <property type="protein sequence ID" value="AAN15415.1"/>
    <property type="molecule type" value="mRNA"/>
</dbReference>
<dbReference type="EMBL" id="AY084720">
    <property type="protein sequence ID" value="AAM61294.1"/>
    <property type="molecule type" value="mRNA"/>
</dbReference>
<dbReference type="PIR" id="T05028">
    <property type="entry name" value="T05028"/>
</dbReference>
<dbReference type="RefSeq" id="NP_193626.1">
    <property type="nucleotide sequence ID" value="NM_118008.4"/>
</dbReference>
<dbReference type="SMR" id="Q8LFP7"/>
<dbReference type="BioGRID" id="12919">
    <property type="interactions" value="1"/>
</dbReference>
<dbReference type="FunCoup" id="Q8LFP7">
    <property type="interactions" value="69"/>
</dbReference>
<dbReference type="STRING" id="3702.Q8LFP7"/>
<dbReference type="TCDB" id="1.A.8.12.7">
    <property type="family name" value="the major intrinsic protein (mip) family"/>
</dbReference>
<dbReference type="iPTMnet" id="Q8LFP7"/>
<dbReference type="PaxDb" id="3702-AT4G18910.1"/>
<dbReference type="ProteomicsDB" id="250512"/>
<dbReference type="EnsemblPlants" id="AT4G18910.1">
    <property type="protein sequence ID" value="AT4G18910.1"/>
    <property type="gene ID" value="AT4G18910"/>
</dbReference>
<dbReference type="GeneID" id="827626"/>
<dbReference type="Gramene" id="AT4G18910.1">
    <property type="protein sequence ID" value="AT4G18910.1"/>
    <property type="gene ID" value="AT4G18910"/>
</dbReference>
<dbReference type="KEGG" id="ath:AT4G18910"/>
<dbReference type="Araport" id="AT4G18910"/>
<dbReference type="TAIR" id="AT4G18910">
    <property type="gene designation" value="NIP1"/>
</dbReference>
<dbReference type="eggNOG" id="KOG0223">
    <property type="taxonomic scope" value="Eukaryota"/>
</dbReference>
<dbReference type="HOGENOM" id="CLU_020019_3_1_1"/>
<dbReference type="InParanoid" id="Q8LFP7"/>
<dbReference type="OMA" id="WGFAVLT"/>
<dbReference type="PhylomeDB" id="Q8LFP7"/>
<dbReference type="PRO" id="PR:Q8LFP7"/>
<dbReference type="Proteomes" id="UP000006548">
    <property type="component" value="Chromosome 4"/>
</dbReference>
<dbReference type="ExpressionAtlas" id="Q8LFP7">
    <property type="expression patterns" value="baseline and differential"/>
</dbReference>
<dbReference type="GO" id="GO:0005886">
    <property type="term" value="C:plasma membrane"/>
    <property type="evidence" value="ECO:0007005"/>
    <property type="project" value="TAIR"/>
</dbReference>
<dbReference type="GO" id="GO:0015105">
    <property type="term" value="F:arsenite transmembrane transporter activity"/>
    <property type="evidence" value="ECO:0000314"/>
    <property type="project" value="TAIR"/>
</dbReference>
<dbReference type="GO" id="GO:0015267">
    <property type="term" value="F:channel activity"/>
    <property type="evidence" value="ECO:0007669"/>
    <property type="project" value="InterPro"/>
</dbReference>
<dbReference type="GO" id="GO:0015700">
    <property type="term" value="P:arsenite transport"/>
    <property type="evidence" value="ECO:0000314"/>
    <property type="project" value="TAIR"/>
</dbReference>
<dbReference type="GO" id="GO:0080170">
    <property type="term" value="P:hydrogen peroxide transmembrane transport"/>
    <property type="evidence" value="ECO:0000314"/>
    <property type="project" value="TAIR"/>
</dbReference>
<dbReference type="GO" id="GO:0046685">
    <property type="term" value="P:response to arsenic-containing substance"/>
    <property type="evidence" value="ECO:0000315"/>
    <property type="project" value="TAIR"/>
</dbReference>
<dbReference type="CDD" id="cd00333">
    <property type="entry name" value="MIP"/>
    <property type="match status" value="1"/>
</dbReference>
<dbReference type="FunFam" id="1.20.1080.10:FF:000029">
    <property type="entry name" value="Aquaporin NIP1-1"/>
    <property type="match status" value="1"/>
</dbReference>
<dbReference type="Gene3D" id="1.20.1080.10">
    <property type="entry name" value="Glycerol uptake facilitator protein"/>
    <property type="match status" value="1"/>
</dbReference>
<dbReference type="InterPro" id="IPR023271">
    <property type="entry name" value="Aquaporin-like"/>
</dbReference>
<dbReference type="InterPro" id="IPR034294">
    <property type="entry name" value="Aquaporin_transptr"/>
</dbReference>
<dbReference type="InterPro" id="IPR000425">
    <property type="entry name" value="MIP"/>
</dbReference>
<dbReference type="InterPro" id="IPR022357">
    <property type="entry name" value="MIP_CS"/>
</dbReference>
<dbReference type="NCBIfam" id="TIGR00861">
    <property type="entry name" value="MIP"/>
    <property type="match status" value="1"/>
</dbReference>
<dbReference type="PANTHER" id="PTHR45724:SF13">
    <property type="entry name" value="AQUAPORIN NIP1-1-RELATED"/>
    <property type="match status" value="1"/>
</dbReference>
<dbReference type="PANTHER" id="PTHR45724">
    <property type="entry name" value="AQUAPORIN NIP2-1"/>
    <property type="match status" value="1"/>
</dbReference>
<dbReference type="Pfam" id="PF00230">
    <property type="entry name" value="MIP"/>
    <property type="match status" value="1"/>
</dbReference>
<dbReference type="PRINTS" id="PR00783">
    <property type="entry name" value="MINTRINSICP"/>
</dbReference>
<dbReference type="SUPFAM" id="SSF81338">
    <property type="entry name" value="Aquaporin-like"/>
    <property type="match status" value="1"/>
</dbReference>
<dbReference type="PROSITE" id="PS00221">
    <property type="entry name" value="MIP"/>
    <property type="match status" value="1"/>
</dbReference>